<sequence length="120" mass="13484">MRALTSLSVVLLALISTVSAQFGFFEQMFGGQQQGQQQRPQNVPSDSAAYRQQYDRSYCEHYLCPDTLACVHYPHHCPCPWPMNEDKFELSEGQRICVSKGGFAANEAARKVELARKGLL</sequence>
<reference key="1">
    <citation type="journal article" date="2011" name="PLoS Pathog.">
        <title>Comparative genomics yields insights into niche adaptation of plant vascular wilt pathogens.</title>
        <authorList>
            <person name="Klosterman S.J."/>
            <person name="Subbarao K.V."/>
            <person name="Kang S."/>
            <person name="Veronese P."/>
            <person name="Gold S.E."/>
            <person name="Thomma B.P.H.J."/>
            <person name="Chen Z."/>
            <person name="Henrissat B."/>
            <person name="Lee Y.-H."/>
            <person name="Park J."/>
            <person name="Garcia-Pedrajas M.D."/>
            <person name="Barbara D.J."/>
            <person name="Anchieta A."/>
            <person name="de Jonge R."/>
            <person name="Santhanam P."/>
            <person name="Maruthachalam K."/>
            <person name="Atallah Z."/>
            <person name="Amyotte S.G."/>
            <person name="Paz Z."/>
            <person name="Inderbitzin P."/>
            <person name="Hayes R.J."/>
            <person name="Heiman D.I."/>
            <person name="Young S."/>
            <person name="Zeng Q."/>
            <person name="Engels R."/>
            <person name="Galagan J."/>
            <person name="Cuomo C.A."/>
            <person name="Dobinson K.F."/>
            <person name="Ma L.-J."/>
        </authorList>
    </citation>
    <scope>NUCLEOTIDE SEQUENCE [LARGE SCALE GENOMIC DNA]</scope>
    <source>
        <strain>VaMs.102 / ATCC MYA-4576 / FGSC 10136</strain>
    </source>
</reference>
<proteinExistence type="inferred from homology"/>
<accession>C9SNH6</accession>
<keyword id="KW-1185">Reference proteome</keyword>
<keyword id="KW-0732">Signal</keyword>
<protein>
    <recommendedName>
        <fullName>Long chronological lifespan protein 2</fullName>
    </recommendedName>
</protein>
<dbReference type="EMBL" id="DS985221">
    <property type="protein sequence ID" value="EEY20341.1"/>
    <property type="molecule type" value="Genomic_DNA"/>
</dbReference>
<dbReference type="RefSeq" id="XP_003002889.1">
    <property type="nucleotide sequence ID" value="XM_003002843.1"/>
</dbReference>
<dbReference type="SMR" id="C9SNH6"/>
<dbReference type="STRING" id="526221.C9SNH6"/>
<dbReference type="GeneID" id="9536162"/>
<dbReference type="KEGG" id="val:VDBG_06451"/>
<dbReference type="eggNOG" id="ENOG502S416">
    <property type="taxonomic scope" value="Eukaryota"/>
</dbReference>
<dbReference type="HOGENOM" id="CLU_142363_0_0_1"/>
<dbReference type="OMA" id="DNYLCPD"/>
<dbReference type="OrthoDB" id="2234316at2759"/>
<dbReference type="Proteomes" id="UP000008698">
    <property type="component" value="Unassembled WGS sequence"/>
</dbReference>
<dbReference type="GO" id="GO:0036503">
    <property type="term" value="P:ERAD pathway"/>
    <property type="evidence" value="ECO:0007669"/>
    <property type="project" value="TreeGrafter"/>
</dbReference>
<dbReference type="CDD" id="cd23996">
    <property type="entry name" value="LCL2-like"/>
    <property type="match status" value="1"/>
</dbReference>
<dbReference type="InterPro" id="IPR034543">
    <property type="entry name" value="LCL2"/>
</dbReference>
<dbReference type="PANTHER" id="PTHR38425">
    <property type="entry name" value="LONG CHRONOLOGICAL LIFESPAN PROTEIN 2"/>
    <property type="match status" value="1"/>
</dbReference>
<dbReference type="PANTHER" id="PTHR38425:SF1">
    <property type="entry name" value="LONG CHRONOLOGICAL LIFESPAN PROTEIN 2"/>
    <property type="match status" value="1"/>
</dbReference>
<feature type="signal peptide" evidence="2">
    <location>
        <begin position="1"/>
        <end position="20"/>
    </location>
</feature>
<feature type="chain" id="PRO_0000408631" description="Long chronological lifespan protein 2">
    <location>
        <begin position="21"/>
        <end position="120"/>
    </location>
</feature>
<name>LCL2_VERA1</name>
<comment type="function">
    <text evidence="1">Probable component of the endoplasmic reticulum-associated degradation (ERAD) pathway.</text>
</comment>
<comment type="similarity">
    <text evidence="3">Belongs to the LCL2 family.</text>
</comment>
<organism>
    <name type="scientific">Verticillium alfalfae (strain VaMs.102 / ATCC MYA-4576 / FGSC 10136)</name>
    <name type="common">Verticillium wilt of alfalfa</name>
    <name type="synonym">Verticillium albo-atrum</name>
    <dbReference type="NCBI Taxonomy" id="526221"/>
    <lineage>
        <taxon>Eukaryota</taxon>
        <taxon>Fungi</taxon>
        <taxon>Dikarya</taxon>
        <taxon>Ascomycota</taxon>
        <taxon>Pezizomycotina</taxon>
        <taxon>Sordariomycetes</taxon>
        <taxon>Hypocreomycetidae</taxon>
        <taxon>Glomerellales</taxon>
        <taxon>Plectosphaerellaceae</taxon>
        <taxon>Verticillium</taxon>
    </lineage>
</organism>
<gene>
    <name type="primary">LCL2</name>
    <name type="ORF">VDBG_06451</name>
</gene>
<evidence type="ECO:0000250" key="1"/>
<evidence type="ECO:0000255" key="2"/>
<evidence type="ECO:0000305" key="3"/>